<protein>
    <recommendedName>
        <fullName>Uncharacterized tatC-like protein ymf16</fullName>
    </recommendedName>
</protein>
<dbReference type="EMBL" id="AF007261">
    <property type="protein sequence ID" value="AAD11893.1"/>
    <property type="molecule type" value="Genomic_DNA"/>
</dbReference>
<dbReference type="PIR" id="S78160">
    <property type="entry name" value="S78160"/>
</dbReference>
<dbReference type="RefSeq" id="NP_044778.1">
    <property type="nucleotide sequence ID" value="NC_001823.1"/>
</dbReference>
<dbReference type="SMR" id="O21266"/>
<dbReference type="GeneID" id="801127"/>
<dbReference type="GO" id="GO:0031966">
    <property type="term" value="C:mitochondrial membrane"/>
    <property type="evidence" value="ECO:0007669"/>
    <property type="project" value="UniProtKB-SubCell"/>
</dbReference>
<dbReference type="GO" id="GO:0033281">
    <property type="term" value="C:TAT protein transport complex"/>
    <property type="evidence" value="ECO:0007669"/>
    <property type="project" value="TreeGrafter"/>
</dbReference>
<dbReference type="GO" id="GO:0009977">
    <property type="term" value="F:proton motive force dependent protein transmembrane transporter activity"/>
    <property type="evidence" value="ECO:0007669"/>
    <property type="project" value="TreeGrafter"/>
</dbReference>
<dbReference type="GO" id="GO:0065002">
    <property type="term" value="P:intracellular protein transmembrane transport"/>
    <property type="evidence" value="ECO:0007669"/>
    <property type="project" value="TreeGrafter"/>
</dbReference>
<dbReference type="GO" id="GO:0043953">
    <property type="term" value="P:protein transport by the Tat complex"/>
    <property type="evidence" value="ECO:0007669"/>
    <property type="project" value="TreeGrafter"/>
</dbReference>
<dbReference type="HAMAP" id="MF_00902">
    <property type="entry name" value="TatC"/>
    <property type="match status" value="1"/>
</dbReference>
<dbReference type="InterPro" id="IPR019820">
    <property type="entry name" value="Sec-indep_translocase_CS"/>
</dbReference>
<dbReference type="InterPro" id="IPR002033">
    <property type="entry name" value="TatC"/>
</dbReference>
<dbReference type="NCBIfam" id="TIGR00945">
    <property type="entry name" value="tatC"/>
    <property type="match status" value="1"/>
</dbReference>
<dbReference type="PANTHER" id="PTHR30371">
    <property type="entry name" value="SEC-INDEPENDENT PROTEIN TRANSLOCASE PROTEIN TATC"/>
    <property type="match status" value="1"/>
</dbReference>
<dbReference type="PANTHER" id="PTHR30371:SF0">
    <property type="entry name" value="SEC-INDEPENDENT PROTEIN TRANSLOCASE PROTEIN TATC, CHLOROPLASTIC-RELATED"/>
    <property type="match status" value="1"/>
</dbReference>
<dbReference type="Pfam" id="PF00902">
    <property type="entry name" value="TatC"/>
    <property type="match status" value="1"/>
</dbReference>
<dbReference type="PRINTS" id="PR01840">
    <property type="entry name" value="TATCFAMILY"/>
</dbReference>
<dbReference type="PROSITE" id="PS01218">
    <property type="entry name" value="TATC"/>
    <property type="match status" value="1"/>
</dbReference>
<reference key="1">
    <citation type="journal article" date="1997" name="Nature">
        <title>An ancestral mitochondrial DNA resembling a eubacterial genome in miniature.</title>
        <authorList>
            <person name="Lang B.F."/>
            <person name="Burger G."/>
            <person name="O'Kelly C.J."/>
            <person name="Cedergren R."/>
            <person name="Golding G.B."/>
            <person name="Lemieux C."/>
            <person name="Sankoff D."/>
            <person name="Turmel M."/>
            <person name="Gray M.W."/>
        </authorList>
    </citation>
    <scope>NUCLEOTIDE SEQUENCE [GENOMIC DNA]</scope>
    <source>
        <strain>ATCC 50394</strain>
    </source>
</reference>
<geneLocation type="mitochondrion"/>
<organism>
    <name type="scientific">Reclinomonas americana</name>
    <dbReference type="NCBI Taxonomy" id="48483"/>
    <lineage>
        <taxon>Eukaryota</taxon>
        <taxon>Discoba</taxon>
        <taxon>Jakobida</taxon>
        <taxon>Histionina</taxon>
        <taxon>Histionidae</taxon>
        <taxon>Reclinomonas</taxon>
    </lineage>
</organism>
<evidence type="ECO:0000255" key="1"/>
<evidence type="ECO:0000305" key="2"/>
<comment type="subcellular location">
    <subcellularLocation>
        <location evidence="2">Mitochondrion membrane</location>
        <topology evidence="2">Multi-pass membrane protein</topology>
    </subcellularLocation>
</comment>
<comment type="similarity">
    <text evidence="2">Belongs to the TatC family.</text>
</comment>
<accession>O21266</accession>
<proteinExistence type="inferred from homology"/>
<name>YMF16_RECAM</name>
<keyword id="KW-0472">Membrane</keyword>
<keyword id="KW-0496">Mitochondrion</keyword>
<keyword id="KW-0812">Transmembrane</keyword>
<keyword id="KW-1133">Transmembrane helix</keyword>
<sequence length="260" mass="31101">MLYNIPILTHLYEIRLRIIYLLYSIFLTCFCSYQYKEEIFYLLFIPLSKNFIYTDLIEAFITYIKLSIIVGIYLSYPIFLYQIWSFLIPGFFLYEKKLFRLLCLTSIFLYFLGSCIGYYLLFPIAFTFFLGFQKLGKDQLFTIELQAKIHEYLILNTKLIFSLSICFQLPVLILFLFKIYPKTYLWLIHKRRFIYLFFFILAAILSPPDILSQFILVIPLILFFEISLFCIKLIQKYNSFMEPIGFEPTASCLQSTRSTI</sequence>
<feature type="chain" id="PRO_0000098107" description="Uncharacterized tatC-like protein ymf16">
    <location>
        <begin position="1"/>
        <end position="260"/>
    </location>
</feature>
<feature type="transmembrane region" description="Helical" evidence="1">
    <location>
        <begin position="39"/>
        <end position="59"/>
    </location>
</feature>
<feature type="transmembrane region" description="Helical" evidence="1">
    <location>
        <begin position="68"/>
        <end position="88"/>
    </location>
</feature>
<feature type="transmembrane region" description="Helical" evidence="1">
    <location>
        <begin position="111"/>
        <end position="131"/>
    </location>
</feature>
<feature type="transmembrane region" description="Helical" evidence="1">
    <location>
        <begin position="159"/>
        <end position="179"/>
    </location>
</feature>
<feature type="transmembrane region" description="Helical" evidence="1">
    <location>
        <begin position="193"/>
        <end position="213"/>
    </location>
</feature>
<feature type="transmembrane region" description="Helical" evidence="1">
    <location>
        <begin position="214"/>
        <end position="234"/>
    </location>
</feature>
<gene>
    <name type="primary">YMF16</name>
</gene>